<sequence>MTHSLTMAAYIVAGVLFILALRGLSNPESARNGNRMGMVGMAIAILTTLLSPSVQAYAWIVLAIAIGGAIGTVIAKKVLMTALPQLVAAFHSLVGMAAVLVATGALLNPEAYGIGSAGAIHAGSLVEMSLGLAVGAITFSGSVIAFGKLQGLIAGKPVTFPMQHPLNAVLGILLVVLLVVFAATESHTAYFALMILAFALGFLLIIPIGGADMPVVISMLNSYSGWAAAGIGFTLGNPLLIIAGALVGSSGAILSYIMCKGMNRSIFNVILGGFGSEGGVAAAGGAAGDRSVKAGSAEDAAFIMKNASKVIIVPGYGMAVAQAQHALREMADVLKKEGVEVSYAIHPVAGRMPGHMNVLLAEANVPYDEVFELEEINSSFQTADVAFVIGANDVTNPAAKTDPSSPIYGMPILDVEKAGTVLFIKRSMASGYAGVENELFFRNNTMMLFGDAKKMTEQIVQAMN</sequence>
<organism>
    <name type="scientific">Rhodospirillum rubrum</name>
    <dbReference type="NCBI Taxonomy" id="1085"/>
    <lineage>
        <taxon>Bacteria</taxon>
        <taxon>Pseudomonadati</taxon>
        <taxon>Pseudomonadota</taxon>
        <taxon>Alphaproteobacteria</taxon>
        <taxon>Rhodospirillales</taxon>
        <taxon>Rhodospirillaceae</taxon>
        <taxon>Rhodospirillum</taxon>
    </lineage>
</organism>
<gene>
    <name type="primary">pntB</name>
    <name type="synonym">nntB</name>
</gene>
<reference key="1">
    <citation type="journal article" date="1994" name="J. Bioenerg. Biomembr.">
        <title>Energy-transducing nicotinamide nucleotide transhydrogenase: nucleotide sequences of the genes and predicted amino acid sequences of the subunits of the enzyme from Rhodospirillum rubrum.</title>
        <authorList>
            <person name="Yamaguchi M."/>
            <person name="Hatefi Y."/>
        </authorList>
    </citation>
    <scope>NUCLEOTIDE SEQUENCE [GENOMIC DNA]</scope>
</reference>
<reference key="2">
    <citation type="journal article" date="2000" name="Biochim. Biophys. Acta">
        <title>Solution structure of the NADP(H)-binding component (dIII) of proton-translocating transhydrogenase from Rhodospirillum rubrum.</title>
        <authorList>
            <person name="Jeeves M."/>
            <person name="Smith K.J."/>
            <person name="Quirk P.G."/>
            <person name="Cotton N.P.J."/>
            <person name="Jackson J.B."/>
        </authorList>
    </citation>
    <scope>STRUCTURE BY NMR OF 262-464</scope>
</reference>
<reference key="3">
    <citation type="journal article" date="2001" name="Structure">
        <title>The crystal structure of an asymmetric complex of the two nucleotide binding components of proton-translocating transhydrogenase.</title>
        <authorList>
            <person name="Cotton N.P.J."/>
            <person name="White S.A."/>
            <person name="Peake S.J."/>
            <person name="McSweeney S."/>
            <person name="Baz Jackson J."/>
        </authorList>
    </citation>
    <scope>X-RAY CRYSTALLOGRAPHY (2.5 ANGSTROMS) OF 262-464</scope>
</reference>
<feature type="chain" id="PRO_0000199027" description="NAD(P) transhydrogenase subunit beta">
    <location>
        <begin position="1"/>
        <end position="464"/>
    </location>
</feature>
<feature type="transmembrane region" description="Helical" evidence="2">
    <location>
        <begin position="54"/>
        <end position="74"/>
    </location>
</feature>
<feature type="transmembrane region" description="Helical" evidence="2">
    <location>
        <begin position="86"/>
        <end position="106"/>
    </location>
</feature>
<feature type="transmembrane region" description="Helical" evidence="2">
    <location>
        <begin position="126"/>
        <end position="146"/>
    </location>
</feature>
<feature type="transmembrane region" description="Helical" evidence="2">
    <location>
        <begin position="164"/>
        <end position="184"/>
    </location>
</feature>
<feature type="transmembrane region" description="Helical" evidence="2">
    <location>
        <begin position="191"/>
        <end position="211"/>
    </location>
</feature>
<feature type="transmembrane region" description="Helical" evidence="2">
    <location>
        <begin position="227"/>
        <end position="247"/>
    </location>
</feature>
<feature type="helix" evidence="4">
    <location>
        <begin position="297"/>
        <end position="306"/>
    </location>
</feature>
<feature type="strand" evidence="4">
    <location>
        <begin position="308"/>
        <end position="314"/>
    </location>
</feature>
<feature type="helix" evidence="4">
    <location>
        <begin position="316"/>
        <end position="321"/>
    </location>
</feature>
<feature type="helix" evidence="4">
    <location>
        <begin position="324"/>
        <end position="336"/>
    </location>
</feature>
<feature type="strand" evidence="4">
    <location>
        <begin position="340"/>
        <end position="345"/>
    </location>
</feature>
<feature type="strand" evidence="4">
    <location>
        <begin position="350"/>
        <end position="352"/>
    </location>
</feature>
<feature type="helix" evidence="4">
    <location>
        <begin position="355"/>
        <end position="362"/>
    </location>
</feature>
<feature type="helix" evidence="4">
    <location>
        <begin position="367"/>
        <end position="369"/>
    </location>
</feature>
<feature type="strand" evidence="4">
    <location>
        <begin position="370"/>
        <end position="372"/>
    </location>
</feature>
<feature type="helix" evidence="4">
    <location>
        <begin position="373"/>
        <end position="376"/>
    </location>
</feature>
<feature type="helix" evidence="4">
    <location>
        <begin position="377"/>
        <end position="379"/>
    </location>
</feature>
<feature type="strand" evidence="4">
    <location>
        <begin position="384"/>
        <end position="390"/>
    </location>
</feature>
<feature type="helix" evidence="4">
    <location>
        <begin position="393"/>
        <end position="395"/>
    </location>
</feature>
<feature type="helix" evidence="4">
    <location>
        <begin position="397"/>
        <end position="399"/>
    </location>
</feature>
<feature type="turn" evidence="4">
    <location>
        <begin position="406"/>
        <end position="409"/>
    </location>
</feature>
<feature type="helix" evidence="4">
    <location>
        <begin position="415"/>
        <end position="417"/>
    </location>
</feature>
<feature type="strand" evidence="4">
    <location>
        <begin position="418"/>
        <end position="428"/>
    </location>
</feature>
<feature type="helix" evidence="4">
    <location>
        <begin position="438"/>
        <end position="441"/>
    </location>
</feature>
<feature type="strand" evidence="4">
    <location>
        <begin position="445"/>
        <end position="450"/>
    </location>
</feature>
<feature type="helix" evidence="4">
    <location>
        <begin position="452"/>
        <end position="462"/>
    </location>
</feature>
<proteinExistence type="evidence at protein level"/>
<keyword id="KW-0002">3D-structure</keyword>
<keyword id="KW-0997">Cell inner membrane</keyword>
<keyword id="KW-1003">Cell membrane</keyword>
<keyword id="KW-0472">Membrane</keyword>
<keyword id="KW-0520">NAD</keyword>
<keyword id="KW-0521">NADP</keyword>
<keyword id="KW-1278">Translocase</keyword>
<keyword id="KW-0812">Transmembrane</keyword>
<keyword id="KW-1133">Transmembrane helix</keyword>
<name>PNTB_RHORU</name>
<comment type="function">
    <text evidence="1">The transhydrogenation between NADH and NADP is coupled to respiration and ATP hydrolysis and functions as a proton pump across the membrane.</text>
</comment>
<comment type="catalytic activity">
    <reaction>
        <text>NAD(+) + NADPH + H(+)(in) = NADH + NADP(+) + H(+)(out)</text>
        <dbReference type="Rhea" id="RHEA:47992"/>
        <dbReference type="ChEBI" id="CHEBI:15378"/>
        <dbReference type="ChEBI" id="CHEBI:57540"/>
        <dbReference type="ChEBI" id="CHEBI:57783"/>
        <dbReference type="ChEBI" id="CHEBI:57945"/>
        <dbReference type="ChEBI" id="CHEBI:58349"/>
        <dbReference type="EC" id="7.1.1.1"/>
    </reaction>
</comment>
<comment type="subunit">
    <text>Complex of an alpha and a beta chain; in Rhodospirillum, the alpha chain seems to be made of two subunits.</text>
</comment>
<comment type="subcellular location">
    <subcellularLocation>
        <location evidence="1">Cell inner membrane</location>
        <topology evidence="1">Multi-pass membrane protein</topology>
    </subcellularLocation>
</comment>
<comment type="similarity">
    <text evidence="3">Belongs to the PNT beta subunit family.</text>
</comment>
<protein>
    <recommendedName>
        <fullName>NAD(P) transhydrogenase subunit beta</fullName>
        <ecNumber>7.1.1.1</ecNumber>
    </recommendedName>
    <alternativeName>
        <fullName>Nicotinamide nucleotide transhydrogenase subunit beta</fullName>
    </alternativeName>
    <alternativeName>
        <fullName>Proton-translocating transhydrogenase NADP(H)-binding component</fullName>
    </alternativeName>
    <alternativeName>
        <fullName>Pyridine nucleotide transhydrogenase subunit beta</fullName>
    </alternativeName>
    <alternativeName>
        <fullName>dIII</fullName>
    </alternativeName>
</protein>
<accession>P0C188</accession>
<accession>Q59763</accession>
<accession>Q59765</accession>
<dbReference type="EC" id="7.1.1.1"/>
<dbReference type="EMBL" id="U01158">
    <property type="protein sequence ID" value="AAC43257.1"/>
    <property type="molecule type" value="Genomic_DNA"/>
</dbReference>
<dbReference type="RefSeq" id="WP_011390030.1">
    <property type="nucleotide sequence ID" value="NZ_DAMDTZ010000090.1"/>
</dbReference>
<dbReference type="PDB" id="2FR8">
    <property type="method" value="X-ray"/>
    <property type="resolution" value="2.60 A"/>
    <property type="chains" value="C=262-464"/>
</dbReference>
<dbReference type="PDB" id="2FRD">
    <property type="method" value="X-ray"/>
    <property type="resolution" value="3.20 A"/>
    <property type="chains" value="C=262-464"/>
</dbReference>
<dbReference type="PDB" id="2FSV">
    <property type="method" value="X-ray"/>
    <property type="resolution" value="2.30 A"/>
    <property type="chains" value="C=262-464"/>
</dbReference>
<dbReference type="PDB" id="2OO5">
    <property type="method" value="X-ray"/>
    <property type="resolution" value="2.60 A"/>
    <property type="chains" value="C=291-464"/>
</dbReference>
<dbReference type="PDB" id="2OOR">
    <property type="method" value="X-ray"/>
    <property type="resolution" value="2.32 A"/>
    <property type="chains" value="C=291-464"/>
</dbReference>
<dbReference type="PDBsum" id="2FR8"/>
<dbReference type="PDBsum" id="2FRD"/>
<dbReference type="PDBsum" id="2FSV"/>
<dbReference type="PDBsum" id="2OO5"/>
<dbReference type="PDBsum" id="2OOR"/>
<dbReference type="BMRB" id="P0C188"/>
<dbReference type="SMR" id="P0C188"/>
<dbReference type="DrugBank" id="DB03461">
    <property type="generic name" value="Nicotinamide adenine dinucleotide phosphate"/>
</dbReference>
<dbReference type="TCDB" id="3.D.2.2.1">
    <property type="family name" value="the proton-translocating transhydrogenase (pth) family"/>
</dbReference>
<dbReference type="OMA" id="IMLPQRH"/>
<dbReference type="EvolutionaryTrace" id="P0C188"/>
<dbReference type="GO" id="GO:0005886">
    <property type="term" value="C:plasma membrane"/>
    <property type="evidence" value="ECO:0007669"/>
    <property type="project" value="UniProtKB-SubCell"/>
</dbReference>
<dbReference type="GO" id="GO:0050661">
    <property type="term" value="F:NADP binding"/>
    <property type="evidence" value="ECO:0007669"/>
    <property type="project" value="InterPro"/>
</dbReference>
<dbReference type="GO" id="GO:0008750">
    <property type="term" value="F:proton-translocating NAD(P)+ transhydrogenase activity"/>
    <property type="evidence" value="ECO:0007669"/>
    <property type="project" value="UniProtKB-EC"/>
</dbReference>
<dbReference type="GO" id="GO:0006740">
    <property type="term" value="P:NADPH regeneration"/>
    <property type="evidence" value="ECO:0000303"/>
    <property type="project" value="ARUK-UCL"/>
</dbReference>
<dbReference type="FunFam" id="3.40.50.1220:FF:000002">
    <property type="entry name" value="NAD(P) transhydrogenase subunit beta"/>
    <property type="match status" value="1"/>
</dbReference>
<dbReference type="Gene3D" id="3.40.50.1220">
    <property type="entry name" value="TPP-binding domain"/>
    <property type="match status" value="1"/>
</dbReference>
<dbReference type="InterPro" id="IPR029035">
    <property type="entry name" value="DHS-like_NAD/FAD-binding_dom"/>
</dbReference>
<dbReference type="InterPro" id="IPR012136">
    <property type="entry name" value="NADH_DH_b"/>
</dbReference>
<dbReference type="InterPro" id="IPR034300">
    <property type="entry name" value="PNTB-like"/>
</dbReference>
<dbReference type="PANTHER" id="PTHR44758">
    <property type="entry name" value="NAD(P) TRANSHYDROGENASE SUBUNIT BETA"/>
    <property type="match status" value="1"/>
</dbReference>
<dbReference type="PANTHER" id="PTHR44758:SF1">
    <property type="entry name" value="NAD(P) TRANSHYDROGENASE SUBUNIT BETA"/>
    <property type="match status" value="1"/>
</dbReference>
<dbReference type="Pfam" id="PF02233">
    <property type="entry name" value="PNTB"/>
    <property type="match status" value="1"/>
</dbReference>
<dbReference type="PIRSF" id="PIRSF000204">
    <property type="entry name" value="PNTB"/>
    <property type="match status" value="1"/>
</dbReference>
<dbReference type="SUPFAM" id="SSF52467">
    <property type="entry name" value="DHS-like NAD/FAD-binding domain"/>
    <property type="match status" value="1"/>
</dbReference>
<evidence type="ECO:0000250" key="1"/>
<evidence type="ECO:0000255" key="2"/>
<evidence type="ECO:0000305" key="3"/>
<evidence type="ECO:0007829" key="4">
    <source>
        <dbReference type="PDB" id="2FSV"/>
    </source>
</evidence>